<gene>
    <name type="ordered locus">VPA0850</name>
</gene>
<evidence type="ECO:0000255" key="1">
    <source>
        <dbReference type="HAMAP-Rule" id="MF_00780"/>
    </source>
</evidence>
<organism>
    <name type="scientific">Vibrio parahaemolyticus serotype O3:K6 (strain RIMD 2210633)</name>
    <dbReference type="NCBI Taxonomy" id="223926"/>
    <lineage>
        <taxon>Bacteria</taxon>
        <taxon>Pseudomonadati</taxon>
        <taxon>Pseudomonadota</taxon>
        <taxon>Gammaproteobacteria</taxon>
        <taxon>Vibrionales</taxon>
        <taxon>Vibrionaceae</taxon>
        <taxon>Vibrio</taxon>
    </lineage>
</organism>
<name>Y4850_VIBPA</name>
<keyword id="KW-0574">Periplasm</keyword>
<keyword id="KW-0732">Signal</keyword>
<proteinExistence type="inferred from homology"/>
<protein>
    <recommendedName>
        <fullName evidence="1">UPF0312 protein VPA0850</fullName>
    </recommendedName>
</protein>
<feature type="signal peptide" evidence="1">
    <location>
        <begin position="1"/>
        <end position="22"/>
    </location>
</feature>
<feature type="chain" id="PRO_0000036288" description="UPF0312 protein VPA0850">
    <location>
        <begin position="23"/>
        <end position="189"/>
    </location>
</feature>
<sequence length="189" mass="20296">MKKSLFATGLAIAMALPLGAQAADYVIDTKGAHASINFKVSHLGYSFIKGRFNTFSGDFSFDEKNIADSKVNVVVDTTSLDSNHAERDKHIRSGDFIDAGKYSEATFKSTKVVDKGNGKLDVTGDLTLHGVTKPITIEAEFVGAGNDPWGGERAGFVGTTRLELADFDIPVMGSSSYVDMELHIEGVKK</sequence>
<dbReference type="EMBL" id="BA000032">
    <property type="protein sequence ID" value="BAC62193.1"/>
    <property type="molecule type" value="Genomic_DNA"/>
</dbReference>
<dbReference type="RefSeq" id="NP_800360.1">
    <property type="nucleotide sequence ID" value="NC_004605.1"/>
</dbReference>
<dbReference type="RefSeq" id="WP_005477055.1">
    <property type="nucleotide sequence ID" value="NC_004605.1"/>
</dbReference>
<dbReference type="SMR" id="Q87HV6"/>
<dbReference type="GeneID" id="1191539"/>
<dbReference type="KEGG" id="vpa:VPA0850"/>
<dbReference type="PATRIC" id="fig|223926.6.peg.3779"/>
<dbReference type="eggNOG" id="COG2353">
    <property type="taxonomic scope" value="Bacteria"/>
</dbReference>
<dbReference type="HOGENOM" id="CLU_071003_1_2_6"/>
<dbReference type="Proteomes" id="UP000002493">
    <property type="component" value="Chromosome 2"/>
</dbReference>
<dbReference type="GO" id="GO:0042597">
    <property type="term" value="C:periplasmic space"/>
    <property type="evidence" value="ECO:0007669"/>
    <property type="project" value="UniProtKB-SubCell"/>
</dbReference>
<dbReference type="Gene3D" id="2.40.128.110">
    <property type="entry name" value="Lipid/polyisoprenoid-binding, YceI-like"/>
    <property type="match status" value="1"/>
</dbReference>
<dbReference type="HAMAP" id="MF_00780">
    <property type="entry name" value="UPF0312"/>
    <property type="match status" value="1"/>
</dbReference>
<dbReference type="InterPro" id="IPR007372">
    <property type="entry name" value="Lipid/polyisoprenoid-bd_YceI"/>
</dbReference>
<dbReference type="InterPro" id="IPR036761">
    <property type="entry name" value="TTHA0802/YceI-like_sf"/>
</dbReference>
<dbReference type="InterPro" id="IPR023480">
    <property type="entry name" value="UPF0312/YceI"/>
</dbReference>
<dbReference type="NCBIfam" id="NF002994">
    <property type="entry name" value="PRK03757.1"/>
    <property type="match status" value="1"/>
</dbReference>
<dbReference type="PANTHER" id="PTHR34406">
    <property type="entry name" value="PROTEIN YCEI"/>
    <property type="match status" value="1"/>
</dbReference>
<dbReference type="PANTHER" id="PTHR34406:SF1">
    <property type="entry name" value="PROTEIN YCEI"/>
    <property type="match status" value="1"/>
</dbReference>
<dbReference type="Pfam" id="PF04264">
    <property type="entry name" value="YceI"/>
    <property type="match status" value="1"/>
</dbReference>
<dbReference type="SMART" id="SM00867">
    <property type="entry name" value="YceI"/>
    <property type="match status" value="1"/>
</dbReference>
<dbReference type="SUPFAM" id="SSF101874">
    <property type="entry name" value="YceI-like"/>
    <property type="match status" value="1"/>
</dbReference>
<comment type="subcellular location">
    <subcellularLocation>
        <location evidence="1">Periplasm</location>
    </subcellularLocation>
</comment>
<comment type="similarity">
    <text evidence="1">Belongs to the UPF0312 family. Type 1 subfamily.</text>
</comment>
<accession>Q87HV6</accession>
<reference key="1">
    <citation type="journal article" date="2003" name="Lancet">
        <title>Genome sequence of Vibrio parahaemolyticus: a pathogenic mechanism distinct from that of V. cholerae.</title>
        <authorList>
            <person name="Makino K."/>
            <person name="Oshima K."/>
            <person name="Kurokawa K."/>
            <person name="Yokoyama K."/>
            <person name="Uda T."/>
            <person name="Tagomori K."/>
            <person name="Iijima Y."/>
            <person name="Najima M."/>
            <person name="Nakano M."/>
            <person name="Yamashita A."/>
            <person name="Kubota Y."/>
            <person name="Kimura S."/>
            <person name="Yasunaga T."/>
            <person name="Honda T."/>
            <person name="Shinagawa H."/>
            <person name="Hattori M."/>
            <person name="Iida T."/>
        </authorList>
    </citation>
    <scope>NUCLEOTIDE SEQUENCE [LARGE SCALE GENOMIC DNA]</scope>
    <source>
        <strain>RIMD 2210633</strain>
    </source>
</reference>